<feature type="signal peptide" evidence="1">
    <location>
        <begin position="1"/>
        <end position="27"/>
    </location>
</feature>
<feature type="chain" id="PRO_0000450498" description="Lactonohydrolase oryL">
    <location>
        <begin position="28"/>
        <end position="436"/>
    </location>
</feature>
<organism>
    <name type="scientific">Aspergillus oryzae (strain ATCC 42149 / RIB 40)</name>
    <name type="common">Yellow koji mold</name>
    <dbReference type="NCBI Taxonomy" id="510516"/>
    <lineage>
        <taxon>Eukaryota</taxon>
        <taxon>Fungi</taxon>
        <taxon>Dikarya</taxon>
        <taxon>Ascomycota</taxon>
        <taxon>Pezizomycotina</taxon>
        <taxon>Eurotiomycetes</taxon>
        <taxon>Eurotiomycetidae</taxon>
        <taxon>Eurotiales</taxon>
        <taxon>Aspergillaceae</taxon>
        <taxon>Aspergillus</taxon>
        <taxon>Aspergillus subgen. Circumdati</taxon>
    </lineage>
</organism>
<proteinExistence type="inferred from homology"/>
<comment type="function">
    <text evidence="2 5">Lactonohydrolase; part of the gene cluster that mediates the biosynthesis of oryzines, natural products with an unusual maleidride backbone (PubMed:30104550). The two subunits of the fungal fatty acid synthase oryfasA and oryfasB probably form octenoic acid (Probable). This fatty acid is most likely activated by the acyl-CoA ligase oryP to give octenyl-CoA before the citrate synthase-like protein oryE catalyzes condensation with oxaloacetate to form tricarboxylic acid (Probable). The next steps of the pathways are conjectural, but a favorite possible route has been proposed, beginning with decarboxylation and concomitant dehydration by the decarboxylase oryM, followed by tautomerization, which may lead to the production of a diene intermediate (Probable). Reduction of this diene intermediate could give the known metabolite piliformic acid (Probable). On the pathway to oryzine B and oryzine A, however, hydroxylation of the diene by the alpha-ketoglutarate-dependent dioxygenase oryG and lactonisation by the lactonohydrolases oryH or oryL could give oryzine B directly (Probable). Finally, enoyl reduction by the dehydrogenase oryD would then convert oryzine B into oryzine A (Probable).</text>
</comment>
<comment type="pathway">
    <text evidence="5">Secondary metabolite biosynthesis.</text>
</comment>
<comment type="similarity">
    <text evidence="4">Belongs to the SMP-30/CGR1 family.</text>
</comment>
<comment type="sequence caution" evidence="4">
    <conflict type="erroneous gene model prediction">
        <sequence resource="EMBL-CDS" id="BAE66064"/>
    </conflict>
</comment>
<dbReference type="EC" id="3.1.1.-" evidence="5"/>
<dbReference type="EMBL" id="BA000056">
    <property type="protein sequence ID" value="BAE66064.1"/>
    <property type="status" value="ALT_SEQ"/>
    <property type="molecule type" value="Genomic_DNA"/>
</dbReference>
<dbReference type="RefSeq" id="XP_001827197.2">
    <property type="nucleotide sequence ID" value="XM_001827145.2"/>
</dbReference>
<dbReference type="SMR" id="Q2TXF9"/>
<dbReference type="STRING" id="510516.Q2TXF9"/>
<dbReference type="EnsemblFungi" id="BAE66064">
    <property type="protein sequence ID" value="BAE66064"/>
    <property type="gene ID" value="AO090010000162"/>
</dbReference>
<dbReference type="VEuPathDB" id="FungiDB:AO090701000942"/>
<dbReference type="HOGENOM" id="CLU_946583_0_0_1"/>
<dbReference type="Proteomes" id="UP000006564">
    <property type="component" value="Chromosome 8"/>
</dbReference>
<dbReference type="GO" id="GO:0016787">
    <property type="term" value="F:hydrolase activity"/>
    <property type="evidence" value="ECO:0007669"/>
    <property type="project" value="UniProtKB-KW"/>
</dbReference>
<dbReference type="Gene3D" id="2.120.10.30">
    <property type="entry name" value="TolB, C-terminal domain"/>
    <property type="match status" value="1"/>
</dbReference>
<dbReference type="InterPro" id="IPR011042">
    <property type="entry name" value="6-blade_b-propeller_TolB-like"/>
</dbReference>
<dbReference type="InterPro" id="IPR052988">
    <property type="entry name" value="Oryzine_lactonohydrolase"/>
</dbReference>
<dbReference type="InterPro" id="IPR013658">
    <property type="entry name" value="SGL"/>
</dbReference>
<dbReference type="PANTHER" id="PTHR47064">
    <property type="entry name" value="PUTATIVE (AFU_ORTHOLOGUE AFUA_1G08990)-RELATED"/>
    <property type="match status" value="1"/>
</dbReference>
<dbReference type="PANTHER" id="PTHR47064:SF2">
    <property type="entry name" value="SMP-30_GLUCONOLACTONASE_LRE-LIKE REGION DOMAIN-CONTAINING PROTEIN-RELATED"/>
    <property type="match status" value="1"/>
</dbReference>
<dbReference type="Pfam" id="PF08450">
    <property type="entry name" value="SGL"/>
    <property type="match status" value="2"/>
</dbReference>
<dbReference type="SUPFAM" id="SSF63829">
    <property type="entry name" value="Calcium-dependent phosphotriesterase"/>
    <property type="match status" value="1"/>
</dbReference>
<keyword id="KW-0378">Hydrolase</keyword>
<keyword id="KW-1185">Reference proteome</keyword>
<keyword id="KW-0732">Signal</keyword>
<accession>Q2TXF9</accession>
<gene>
    <name evidence="3" type="primary">oryL</name>
    <name type="ORF">AO090010000162</name>
</gene>
<protein>
    <recommendedName>
        <fullName evidence="3">Lactonohydrolase oryL</fullName>
        <ecNumber evidence="5">3.1.1.-</ecNumber>
    </recommendedName>
    <alternativeName>
        <fullName evidence="3">Oryzines biosynthesis cluster protein L</fullName>
    </alternativeName>
</protein>
<evidence type="ECO:0000255" key="1"/>
<evidence type="ECO:0000269" key="2">
    <source>
    </source>
</evidence>
<evidence type="ECO:0000303" key="3">
    <source>
    </source>
</evidence>
<evidence type="ECO:0000305" key="4"/>
<evidence type="ECO:0000305" key="5">
    <source>
    </source>
</evidence>
<reference key="1">
    <citation type="journal article" date="2005" name="Nature">
        <title>Genome sequencing and analysis of Aspergillus oryzae.</title>
        <authorList>
            <person name="Machida M."/>
            <person name="Asai K."/>
            <person name="Sano M."/>
            <person name="Tanaka T."/>
            <person name="Kumagai T."/>
            <person name="Terai G."/>
            <person name="Kusumoto K."/>
            <person name="Arima T."/>
            <person name="Akita O."/>
            <person name="Kashiwagi Y."/>
            <person name="Abe K."/>
            <person name="Gomi K."/>
            <person name="Horiuchi H."/>
            <person name="Kitamoto K."/>
            <person name="Kobayashi T."/>
            <person name="Takeuchi M."/>
            <person name="Denning D.W."/>
            <person name="Galagan J.E."/>
            <person name="Nierman W.C."/>
            <person name="Yu J."/>
            <person name="Archer D.B."/>
            <person name="Bennett J.W."/>
            <person name="Bhatnagar D."/>
            <person name="Cleveland T.E."/>
            <person name="Fedorova N.D."/>
            <person name="Gotoh O."/>
            <person name="Horikawa H."/>
            <person name="Hosoyama A."/>
            <person name="Ichinomiya M."/>
            <person name="Igarashi R."/>
            <person name="Iwashita K."/>
            <person name="Juvvadi P.R."/>
            <person name="Kato M."/>
            <person name="Kato Y."/>
            <person name="Kin T."/>
            <person name="Kokubun A."/>
            <person name="Maeda H."/>
            <person name="Maeyama N."/>
            <person name="Maruyama J."/>
            <person name="Nagasaki H."/>
            <person name="Nakajima T."/>
            <person name="Oda K."/>
            <person name="Okada K."/>
            <person name="Paulsen I."/>
            <person name="Sakamoto K."/>
            <person name="Sawano T."/>
            <person name="Takahashi M."/>
            <person name="Takase K."/>
            <person name="Terabayashi Y."/>
            <person name="Wortman J.R."/>
            <person name="Yamada O."/>
            <person name="Yamagata Y."/>
            <person name="Anazawa H."/>
            <person name="Hata Y."/>
            <person name="Koide Y."/>
            <person name="Komori T."/>
            <person name="Koyama Y."/>
            <person name="Minetoki T."/>
            <person name="Suharnan S."/>
            <person name="Tanaka A."/>
            <person name="Isono K."/>
            <person name="Kuhara S."/>
            <person name="Ogasawara N."/>
            <person name="Kikuchi H."/>
        </authorList>
    </citation>
    <scope>NUCLEOTIDE SEQUENCE [LARGE SCALE GENOMIC DNA]</scope>
    <source>
        <strain>ATCC 42149 / RIB 40</strain>
    </source>
</reference>
<reference key="2">
    <citation type="journal article" date="2018" name="J. Fungi">
        <title>Oryzines A &amp; B, maleidride congeners from Aspergillus oryzae and their putative biosynthesis.</title>
        <authorList>
            <person name="Wasil Z."/>
            <person name="Kuhnert E."/>
            <person name="Simpson T.J."/>
            <person name="Cox R.J."/>
        </authorList>
    </citation>
    <scope>FUNCTION</scope>
    <scope>PATHWAY</scope>
</reference>
<sequence>MLSYTSHCLQALLGVASLPYRQYQAYSSPQAPLQVPQVPQAGPPITTLVSSCAGFSYPEVACIDRYGSLLQGEFERKVRNVLGDADTYISTNAPSEPTFSDLQNADFLVWNQSAAKAILGPNPHVDFMFSIEDCSHEAPVYVPTTNELYFSRLQQGFLPQLVINLNNDPPTLEEKLAQPPIYAATGARFRDGLLYLATIGGNESLAGYTFRPGLYTLDPITGKTQALLNNYYGYYFNAVDDLDIDHEGQIWFTDNDYGRPCQVNTYAPQINAATYRFNPKTGLVTMVDDTLLEPNGLTFSPDNKTVYLTDTGAGSAIIDPNIYPAPHIAYNSTRKGRTIYAYDVAPSRKALLNKRPVYLSMEYAPDGIKTSREGYLVSATGKGVVVLTDEGEPLVRVQTNFTVINIAFAGAERDELWAIGKGGVARIRWGLKGSYA</sequence>
<name>ORYL_ASPOR</name>